<feature type="chain" id="PRO_0000053602" description="COUP transcription factor 1">
    <location>
        <begin position="1"/>
        <end position="423"/>
    </location>
</feature>
<feature type="domain" description="NR LBD" evidence="2">
    <location>
        <begin position="184"/>
        <end position="410"/>
    </location>
</feature>
<feature type="DNA-binding region" description="Nuclear receptor" evidence="1">
    <location>
        <begin position="83"/>
        <end position="158"/>
    </location>
</feature>
<feature type="zinc finger region" description="NR C4-type" evidence="1">
    <location>
        <begin position="86"/>
        <end position="106"/>
    </location>
</feature>
<feature type="zinc finger region" description="NR C4-type" evidence="1">
    <location>
        <begin position="122"/>
        <end position="146"/>
    </location>
</feature>
<feature type="region of interest" description="Disordered" evidence="3">
    <location>
        <begin position="1"/>
        <end position="81"/>
    </location>
</feature>
<feature type="compositionally biased region" description="Low complexity" evidence="3">
    <location>
        <begin position="39"/>
        <end position="67"/>
    </location>
</feature>
<feature type="sequence variant" id="VAR_078708" description="Found in a patient with early infantile epileptic encephalopathy; likely pathogenic." evidence="9">
    <location>
        <position position="110"/>
    </location>
</feature>
<feature type="sequence variant" id="VAR_071319" description="In BBSOAS; decreases transcriptional activity; dbSNP:rs587777277." evidence="8">
    <original>R</original>
    <variation>K</variation>
    <location>
        <position position="112"/>
    </location>
</feature>
<feature type="sequence variant" id="VAR_071320" description="In BBSOAS; decreases transcriptional activity; dbSNP:rs587777275." evidence="8">
    <original>S</original>
    <variation>R</variation>
    <location>
        <position position="113"/>
    </location>
</feature>
<feature type="sequence variant" id="VAR_071321" description="In BBSOAS; decreases transcriptional activity; dbSNP:rs587777274." evidence="8">
    <original>R</original>
    <variation>P</variation>
    <location>
        <position position="115"/>
    </location>
</feature>
<feature type="sequence variant" id="VAR_071322" description="In BBSOAS; decreases transcriptional activity; dbSNP:rs587777276." evidence="8">
    <original>L</original>
    <variation>P</variation>
    <location>
        <position position="252"/>
    </location>
</feature>
<feature type="turn" evidence="11">
    <location>
        <begin position="87"/>
        <end position="89"/>
    </location>
</feature>
<feature type="strand" evidence="11">
    <location>
        <begin position="95"/>
        <end position="97"/>
    </location>
</feature>
<feature type="helix" evidence="11">
    <location>
        <begin position="104"/>
        <end position="114"/>
    </location>
</feature>
<feature type="turn" evidence="11">
    <location>
        <begin position="115"/>
        <end position="117"/>
    </location>
</feature>
<feature type="strand" evidence="11">
    <location>
        <begin position="132"/>
        <end position="136"/>
    </location>
</feature>
<feature type="helix" evidence="11">
    <location>
        <begin position="140"/>
        <end position="149"/>
    </location>
</feature>
<feature type="helix" evidence="11">
    <location>
        <begin position="153"/>
        <end position="156"/>
    </location>
</feature>
<sequence length="423" mass="46156">MAMVVSSWRDPQDDVAGGNPGGPNPAAQAARGGGGGAGEQQQQAGSGAPHTPQTPGQPGAPATPGTAGDKGQGPPGSGQSQQHIECVVCGDKSSGKHYGQFTCEGCKSFFKRSVRRNLTYTCRANRNCPIDQHHRNQCQYCRLKKCLKVGMRREAVQRGRMPPTQPNPGQYALTNGDPLNGHCYLSGYISLLLRAEPYPTSRYGSQCMQPNNIMGIENICELAARLLFSAVEWARNIPFFPDLQITDQVSLLRLTWSELFVLNAAQCSMPLHVAPLLAAAGLHASPMSADRVVAFMDHIRIFQEQVEKLKALHVDSAEYSCLKAIVLFTSDACGLSDAAHIESLQEKSQCALEEYVRSQYPNQPSRFGKLLLRLPSLRTVSSSVIEQLFFVRLVGKTPIETLIRDMLLSGSSFNWPYMSIQCS</sequence>
<reference key="1">
    <citation type="journal article" date="1989" name="Nature">
        <title>COUP transcription factor is a member of the steroid receptor superfamily.</title>
        <authorList>
            <person name="Wang L.-H."/>
            <person name="Tsai S.Y."/>
            <person name="Cook R.G."/>
            <person name="Beattie W.G."/>
            <person name="Tsai M.-J."/>
            <person name="O'Malley B.W."/>
        </authorList>
    </citation>
    <scope>NUCLEOTIDE SEQUENCE [MRNA] OF 6-423</scope>
    <scope>PARTIAL PROTEIN SEQUENCE</scope>
</reference>
<reference key="2">
    <citation type="journal article" date="1988" name="Nucleic Acids Res.">
        <title>Identification of two novel members of erbA superfamily by molecular cloning: the gene products of the two are highly related to each other.</title>
        <authorList>
            <person name="Miyajima N."/>
            <person name="Kadowaki Y."/>
            <person name="Fukushige S."/>
            <person name="Shimizu S."/>
            <person name="Semba K."/>
            <person name="Yamanashi Y."/>
            <person name="Matsubara K."/>
            <person name="Toyoshima K."/>
            <person name="Yamamoto T."/>
        </authorList>
    </citation>
    <scope>NUCLEOTIDE SEQUENCE [GENOMIC DNA]</scope>
    <source>
        <tissue>Lung</tissue>
    </source>
</reference>
<reference key="3">
    <citation type="journal article" date="2004" name="Genome Res.">
        <title>The status, quality, and expansion of the NIH full-length cDNA project: the Mammalian Gene Collection (MGC).</title>
        <authorList>
            <consortium name="The MGC Project Team"/>
        </authorList>
    </citation>
    <scope>NUCLEOTIDE SEQUENCE [LARGE SCALE MRNA]</scope>
    <source>
        <tissue>Lung</tissue>
        <tissue>Uterus</tissue>
    </source>
</reference>
<reference key="4">
    <citation type="journal article" date="1992" name="J. Biol. Chem.">
        <title>Members of the steroid hormone receptor superfamily interact with TFIIB (S300-II).</title>
        <authorList>
            <person name="Ing N.H."/>
            <person name="Beekman J.M."/>
            <person name="Tsai S.Y."/>
            <person name="Tsai M.J."/>
            <person name="O'Malley B.W."/>
        </authorList>
    </citation>
    <scope>INTERACTION WITH GTF2B</scope>
</reference>
<reference key="5">
    <citation type="journal article" date="1999" name="Mol. Cell. Biol.">
        <title>Alien, a highly conserved protein with characteristics of a corepressor for members of the nuclear hormone receptor superfamily.</title>
        <authorList>
            <person name="Dressel U."/>
            <person name="Thormeyer D."/>
            <person name="Altincicek B."/>
            <person name="Paululat A."/>
            <person name="Eggert M."/>
            <person name="Schneider S."/>
            <person name="Tenbaum S.P."/>
            <person name="Renkawitz R."/>
            <person name="Baniahmad A."/>
        </authorList>
    </citation>
    <scope>INTERACTION WITH COPS2</scope>
</reference>
<reference key="6">
    <citation type="journal article" date="2000" name="J. Biol. Chem.">
        <title>Nuclear orphan receptors regulate transcription of the gene for the human luteinizing hormone receptor.</title>
        <authorList>
            <person name="Zhang Y."/>
            <person name="Dufau M.L."/>
        </authorList>
    </citation>
    <scope>FUNCTION</scope>
</reference>
<reference key="7">
    <citation type="journal article" date="2001" name="Mol. Endocrinol.">
        <title>EAR2 and EAR3/COUP-TFI regulate transcription of the rat LH receptor.</title>
        <authorList>
            <person name="Zhang Y."/>
            <person name="Dufau M.L."/>
        </authorList>
    </citation>
    <scope>FUNCTION</scope>
    <scope>SUBUNIT</scope>
    <scope>INDUCTION BY GONADOTROPIN</scope>
</reference>
<reference key="8">
    <citation type="submission" date="2008-02" db="PDB data bank">
        <title>Solution structure of the zinc finger, C4-type domain of human COUP transcription factor 1.</title>
        <authorList>
            <consortium name="RIKEN structural genomics initiative (RSGI)"/>
        </authorList>
    </citation>
    <scope>STRUCTURE BY NMR OF 84-162</scope>
</reference>
<reference key="9">
    <citation type="journal article" date="2014" name="Am. J. Hum. Genet.">
        <title>NR2F1 mutations cause optic atrophy with intellectual disability.</title>
        <authorList>
            <person name="Bosch D.G."/>
            <person name="Boonstra F.N."/>
            <person name="Gonzaga-Jauregui C."/>
            <person name="Xu M."/>
            <person name="de Ligt J."/>
            <person name="Jhangiani S."/>
            <person name="Wiszniewski W."/>
            <person name="Muzny D.M."/>
            <person name="Yntema H.G."/>
            <person name="Pfundt R."/>
            <person name="Vissers L.E."/>
            <person name="Spruijt L."/>
            <person name="Blokland E.A."/>
            <person name="Chen C.A."/>
            <person name="Lewis R.A."/>
            <person name="Tsai S.Y."/>
            <person name="Gibbs R.A."/>
            <person name="Tsai M.J."/>
            <person name="Lupski J.R."/>
            <person name="Zoghbi H.Y."/>
            <person name="Cremers F.P."/>
            <person name="de Vries B.B."/>
            <person name="Schaaf C.P."/>
        </authorList>
    </citation>
    <scope>INVOLVEMENT IN BBSOAS</scope>
    <scope>VARIANTS BBSOAS LYS-112; ARG-113; PRO-115 AND PRO-252</scope>
    <scope>CHARACTERIZATION OF VARIANTS BBSOAS LYS-112; ARG-113; PRO-115 AND PRO-252</scope>
</reference>
<reference key="10">
    <citation type="journal article" date="2016" name="Clin. Genet.">
        <title>Whole-exome sequencing improves the diagnosis yield in sporadic infantile spasm syndrome.</title>
        <authorList>
            <person name="Dimassi S."/>
            <person name="Labalme A."/>
            <person name="Ville D."/>
            <person name="Calender A."/>
            <person name="Mignot C."/>
            <person name="Boutry-Kryza N."/>
            <person name="de Bellescize J."/>
            <person name="Rivier-Ringenbach C."/>
            <person name="Bourel-Ponchel E."/>
            <person name="Cheillan D."/>
            <person name="Simonet T."/>
            <person name="Maincent K."/>
            <person name="Rossi M."/>
            <person name="Till M."/>
            <person name="Mougou-Zerelli S."/>
            <person name="Edery P."/>
            <person name="Saad A."/>
            <person name="Heron D."/>
            <person name="des Portes V."/>
            <person name="Sanlaville D."/>
            <person name="Lesca G."/>
        </authorList>
    </citation>
    <scope>VARIANT PHE-110 DEL</scope>
</reference>
<accession>P10589</accession>
<comment type="function">
    <text evidence="5 6">Coup (chicken ovalbumin upstream promoter) transcription factor binds to the ovalbumin promoter and, in conjunction with another protein (S300-II) stimulates initiation of transcription. Binds to both direct repeats and palindromes of the 5'-AGGTCA-3' motif. Represses transcriptional activity of LHCG.</text>
</comment>
<comment type="subunit">
    <text evidence="4 6 7">Binds DNA as dimer; homodimer and probable heterodimer with NR2F6 (PubMed:11682620). Interacts with GTF2B; this interaction is direct (PubMed:1517211). Interacts with COPS2 (PubMed:10207062).</text>
</comment>
<comment type="subcellular location">
    <subcellularLocation>
        <location evidence="10">Nucleus</location>
    </subcellularLocation>
</comment>
<comment type="induction">
    <text evidence="6">Inhibited by gonadotropin in granulosa cells.</text>
</comment>
<comment type="disease" evidence="8">
    <disease id="DI-04111">
        <name>Bosch-Boonstra-Schaaf optic atrophy syndrome</name>
        <acronym>BBSOAS</acronym>
        <description>An autosomal dominant disorder characterized by optic atrophy associated with developmental delay and intellectual disability. Most patients also have evidence of cerebral visual impairment.</description>
        <dbReference type="MIM" id="615722"/>
    </disease>
    <text>The disease is caused by variants affecting the gene represented in this entry.</text>
</comment>
<comment type="similarity">
    <text evidence="10">Belongs to the nuclear hormone receptor family. NR2 subfamily.</text>
</comment>
<organism>
    <name type="scientific">Homo sapiens</name>
    <name type="common">Human</name>
    <dbReference type="NCBI Taxonomy" id="9606"/>
    <lineage>
        <taxon>Eukaryota</taxon>
        <taxon>Metazoa</taxon>
        <taxon>Chordata</taxon>
        <taxon>Craniata</taxon>
        <taxon>Vertebrata</taxon>
        <taxon>Euteleostomi</taxon>
        <taxon>Mammalia</taxon>
        <taxon>Eutheria</taxon>
        <taxon>Euarchontoglires</taxon>
        <taxon>Primates</taxon>
        <taxon>Haplorrhini</taxon>
        <taxon>Catarrhini</taxon>
        <taxon>Hominidae</taxon>
        <taxon>Homo</taxon>
    </lineage>
</organism>
<protein>
    <recommendedName>
        <fullName>COUP transcription factor 1</fullName>
        <shortName>COUP-TF1</shortName>
    </recommendedName>
    <alternativeName>
        <fullName>COUP transcription factor I</fullName>
        <shortName>COUP-TF I</shortName>
    </alternativeName>
    <alternativeName>
        <fullName>Nuclear receptor subfamily 2 group F member 1</fullName>
    </alternativeName>
    <alternativeName>
        <fullName>V-erbA-related protein 3</fullName>
        <shortName>EAR-3</shortName>
    </alternativeName>
</protein>
<evidence type="ECO:0000255" key="1">
    <source>
        <dbReference type="PROSITE-ProRule" id="PRU00407"/>
    </source>
</evidence>
<evidence type="ECO:0000255" key="2">
    <source>
        <dbReference type="PROSITE-ProRule" id="PRU01189"/>
    </source>
</evidence>
<evidence type="ECO:0000256" key="3">
    <source>
        <dbReference type="SAM" id="MobiDB-lite"/>
    </source>
</evidence>
<evidence type="ECO:0000269" key="4">
    <source>
    </source>
</evidence>
<evidence type="ECO:0000269" key="5">
    <source>
    </source>
</evidence>
<evidence type="ECO:0000269" key="6">
    <source>
    </source>
</evidence>
<evidence type="ECO:0000269" key="7">
    <source>
    </source>
</evidence>
<evidence type="ECO:0000269" key="8">
    <source>
    </source>
</evidence>
<evidence type="ECO:0000269" key="9">
    <source>
    </source>
</evidence>
<evidence type="ECO:0000305" key="10"/>
<evidence type="ECO:0007829" key="11">
    <source>
        <dbReference type="PDB" id="2EBL"/>
    </source>
</evidence>
<name>COT1_HUMAN</name>
<gene>
    <name type="primary">NR2F1</name>
    <name type="synonym">EAR3</name>
    <name type="synonym">ERBAL3</name>
    <name type="synonym">TFCOUP1</name>
</gene>
<keyword id="KW-0002">3D-structure</keyword>
<keyword id="KW-0010">Activator</keyword>
<keyword id="KW-0903">Direct protein sequencing</keyword>
<keyword id="KW-0225">Disease variant</keyword>
<keyword id="KW-0238">DNA-binding</keyword>
<keyword id="KW-0479">Metal-binding</keyword>
<keyword id="KW-0539">Nucleus</keyword>
<keyword id="KW-1267">Proteomics identification</keyword>
<keyword id="KW-0675">Receptor</keyword>
<keyword id="KW-1185">Reference proteome</keyword>
<keyword id="KW-0678">Repressor</keyword>
<keyword id="KW-0804">Transcription</keyword>
<keyword id="KW-0805">Transcription regulation</keyword>
<keyword id="KW-0862">Zinc</keyword>
<keyword id="KW-0863">Zinc-finger</keyword>
<dbReference type="EMBL" id="X16155">
    <property type="protein sequence ID" value="CAA34277.1"/>
    <property type="molecule type" value="mRNA"/>
</dbReference>
<dbReference type="EMBL" id="X12795">
    <property type="protein sequence ID" value="CAA31283.1"/>
    <property type="molecule type" value="Genomic_DNA"/>
</dbReference>
<dbReference type="EMBL" id="BC004154">
    <property type="protein sequence ID" value="AAH04154.1"/>
    <property type="molecule type" value="mRNA"/>
</dbReference>
<dbReference type="EMBL" id="BC017493">
    <property type="protein sequence ID" value="AAH17493.1"/>
    <property type="molecule type" value="mRNA"/>
</dbReference>
<dbReference type="CCDS" id="CCDS4068.1"/>
<dbReference type="PIR" id="S02710">
    <property type="entry name" value="S02710"/>
</dbReference>
<dbReference type="RefSeq" id="NP_005645.1">
    <property type="nucleotide sequence ID" value="NM_005654.6"/>
</dbReference>
<dbReference type="PDB" id="2EBL">
    <property type="method" value="NMR"/>
    <property type="chains" value="A=84-159"/>
</dbReference>
<dbReference type="PDBsum" id="2EBL"/>
<dbReference type="SMR" id="P10589"/>
<dbReference type="BioGRID" id="112883">
    <property type="interactions" value="70"/>
</dbReference>
<dbReference type="DIP" id="DIP-622N"/>
<dbReference type="FunCoup" id="P10589">
    <property type="interactions" value="2625"/>
</dbReference>
<dbReference type="IntAct" id="P10589">
    <property type="interactions" value="23"/>
</dbReference>
<dbReference type="MINT" id="P10589"/>
<dbReference type="STRING" id="9606.ENSP00000325819"/>
<dbReference type="BindingDB" id="P10589"/>
<dbReference type="ChEMBL" id="CHEMBL1961789"/>
<dbReference type="DrugBank" id="DB06732">
    <property type="generic name" value="beta-Naphthoflavone"/>
</dbReference>
<dbReference type="GlyGen" id="P10589">
    <property type="glycosylation" value="1 site"/>
</dbReference>
<dbReference type="iPTMnet" id="P10589"/>
<dbReference type="PhosphoSitePlus" id="P10589"/>
<dbReference type="BioMuta" id="NR2F1"/>
<dbReference type="DMDM" id="116959"/>
<dbReference type="jPOST" id="P10589"/>
<dbReference type="MassIVE" id="P10589"/>
<dbReference type="PaxDb" id="9606-ENSP00000325819"/>
<dbReference type="PeptideAtlas" id="P10589"/>
<dbReference type="ProteomicsDB" id="52615"/>
<dbReference type="Pumba" id="P10589"/>
<dbReference type="Antibodypedia" id="24914">
    <property type="antibodies" value="259 antibodies from 32 providers"/>
</dbReference>
<dbReference type="DNASU" id="7025"/>
<dbReference type="Ensembl" id="ENST00000327111.8">
    <property type="protein sequence ID" value="ENSP00000325819.3"/>
    <property type="gene ID" value="ENSG00000175745.15"/>
</dbReference>
<dbReference type="GeneID" id="7025"/>
<dbReference type="KEGG" id="hsa:7025"/>
<dbReference type="MANE-Select" id="ENST00000327111.8">
    <property type="protein sequence ID" value="ENSP00000325819.3"/>
    <property type="RefSeq nucleotide sequence ID" value="NM_005654.6"/>
    <property type="RefSeq protein sequence ID" value="NP_005645.1"/>
</dbReference>
<dbReference type="UCSC" id="uc003kkj.4">
    <property type="organism name" value="human"/>
</dbReference>
<dbReference type="AGR" id="HGNC:7975"/>
<dbReference type="CTD" id="7025"/>
<dbReference type="DisGeNET" id="7025"/>
<dbReference type="GeneCards" id="NR2F1"/>
<dbReference type="GeneReviews" id="NR2F1"/>
<dbReference type="HGNC" id="HGNC:7975">
    <property type="gene designation" value="NR2F1"/>
</dbReference>
<dbReference type="HPA" id="ENSG00000175745">
    <property type="expression patterns" value="Low tissue specificity"/>
</dbReference>
<dbReference type="MalaCards" id="NR2F1"/>
<dbReference type="MIM" id="132890">
    <property type="type" value="gene"/>
</dbReference>
<dbReference type="MIM" id="615722">
    <property type="type" value="phenotype"/>
</dbReference>
<dbReference type="neXtProt" id="NX_P10589"/>
<dbReference type="OpenTargets" id="ENSG00000175745"/>
<dbReference type="Orphanet" id="401777">
    <property type="disease" value="Optic atrophy-intellectual disability syndrome"/>
</dbReference>
<dbReference type="PharmGKB" id="PA31758"/>
<dbReference type="VEuPathDB" id="HostDB:ENSG00000175745"/>
<dbReference type="eggNOG" id="KOG3575">
    <property type="taxonomic scope" value="Eukaryota"/>
</dbReference>
<dbReference type="GeneTree" id="ENSGT00940000157876"/>
<dbReference type="InParanoid" id="P10589"/>
<dbReference type="OMA" id="QWKEEHR"/>
<dbReference type="OrthoDB" id="5873264at2759"/>
<dbReference type="PAN-GO" id="P10589">
    <property type="GO annotations" value="6 GO annotations based on evolutionary models"/>
</dbReference>
<dbReference type="PhylomeDB" id="P10589"/>
<dbReference type="TreeFam" id="TF352097"/>
<dbReference type="PathwayCommons" id="P10589"/>
<dbReference type="Reactome" id="R-HSA-383280">
    <property type="pathway name" value="Nuclear Receptor transcription pathway"/>
</dbReference>
<dbReference type="SignaLink" id="P10589"/>
<dbReference type="SIGNOR" id="P10589"/>
<dbReference type="BioGRID-ORCS" id="7025">
    <property type="hits" value="22 hits in 1175 CRISPR screens"/>
</dbReference>
<dbReference type="ChiTaRS" id="NR2F1">
    <property type="organism name" value="human"/>
</dbReference>
<dbReference type="EvolutionaryTrace" id="P10589"/>
<dbReference type="GeneWiki" id="COUP-TFI"/>
<dbReference type="GenomeRNAi" id="7025"/>
<dbReference type="Pharos" id="P10589">
    <property type="development level" value="Tbio"/>
</dbReference>
<dbReference type="PRO" id="PR:P10589"/>
<dbReference type="Proteomes" id="UP000005640">
    <property type="component" value="Chromosome 5"/>
</dbReference>
<dbReference type="RNAct" id="P10589">
    <property type="molecule type" value="protein"/>
</dbReference>
<dbReference type="Bgee" id="ENSG00000175745">
    <property type="expression patterns" value="Expressed in ventricular zone and 183 other cell types or tissues"/>
</dbReference>
<dbReference type="ExpressionAtlas" id="P10589">
    <property type="expression patterns" value="baseline and differential"/>
</dbReference>
<dbReference type="GO" id="GO:0005829">
    <property type="term" value="C:cytosol"/>
    <property type="evidence" value="ECO:0000314"/>
    <property type="project" value="HPA"/>
</dbReference>
<dbReference type="GO" id="GO:0005654">
    <property type="term" value="C:nucleoplasm"/>
    <property type="evidence" value="ECO:0000314"/>
    <property type="project" value="HPA"/>
</dbReference>
<dbReference type="GO" id="GO:0005634">
    <property type="term" value="C:nucleus"/>
    <property type="evidence" value="ECO:0000314"/>
    <property type="project" value="UniProtKB"/>
</dbReference>
<dbReference type="GO" id="GO:0003700">
    <property type="term" value="F:DNA-binding transcription factor activity"/>
    <property type="evidence" value="ECO:0000314"/>
    <property type="project" value="UniProtKB"/>
</dbReference>
<dbReference type="GO" id="GO:0001227">
    <property type="term" value="F:DNA-binding transcription repressor activity, RNA polymerase II-specific"/>
    <property type="evidence" value="ECO:0000314"/>
    <property type="project" value="NTNU_SB"/>
</dbReference>
<dbReference type="GO" id="GO:0004879">
    <property type="term" value="F:nuclear receptor activity"/>
    <property type="evidence" value="ECO:0000318"/>
    <property type="project" value="GO_Central"/>
</dbReference>
<dbReference type="GO" id="GO:0044323">
    <property type="term" value="F:retinoic acid-responsive element binding"/>
    <property type="evidence" value="ECO:0007669"/>
    <property type="project" value="Ensembl"/>
</dbReference>
<dbReference type="GO" id="GO:0000978">
    <property type="term" value="F:RNA polymerase II cis-regulatory region sequence-specific DNA binding"/>
    <property type="evidence" value="ECO:0000314"/>
    <property type="project" value="NTNU_SB"/>
</dbReference>
<dbReference type="GO" id="GO:0043565">
    <property type="term" value="F:sequence-specific DNA binding"/>
    <property type="evidence" value="ECO:0000314"/>
    <property type="project" value="UniProtKB"/>
</dbReference>
<dbReference type="GO" id="GO:1990837">
    <property type="term" value="F:sequence-specific double-stranded DNA binding"/>
    <property type="evidence" value="ECO:0000314"/>
    <property type="project" value="ARUK-UCL"/>
</dbReference>
<dbReference type="GO" id="GO:0008270">
    <property type="term" value="F:zinc ion binding"/>
    <property type="evidence" value="ECO:0007669"/>
    <property type="project" value="UniProtKB-KW"/>
</dbReference>
<dbReference type="GO" id="GO:0030154">
    <property type="term" value="P:cell differentiation"/>
    <property type="evidence" value="ECO:0000318"/>
    <property type="project" value="GO_Central"/>
</dbReference>
<dbReference type="GO" id="GO:0010977">
    <property type="term" value="P:negative regulation of neuron projection development"/>
    <property type="evidence" value="ECO:0007669"/>
    <property type="project" value="Ensembl"/>
</dbReference>
<dbReference type="GO" id="GO:0000122">
    <property type="term" value="P:negative regulation of transcription by RNA polymerase II"/>
    <property type="evidence" value="ECO:0000314"/>
    <property type="project" value="UniProtKB"/>
</dbReference>
<dbReference type="GO" id="GO:0007399">
    <property type="term" value="P:nervous system development"/>
    <property type="evidence" value="ECO:0000318"/>
    <property type="project" value="GO_Central"/>
</dbReference>
<dbReference type="GO" id="GO:0045944">
    <property type="term" value="P:positive regulation of transcription by RNA polymerase II"/>
    <property type="evidence" value="ECO:0007669"/>
    <property type="project" value="Ensembl"/>
</dbReference>
<dbReference type="GO" id="GO:0007165">
    <property type="term" value="P:signal transduction"/>
    <property type="evidence" value="ECO:0000304"/>
    <property type="project" value="ProtInc"/>
</dbReference>
<dbReference type="CDD" id="cd06958">
    <property type="entry name" value="NR_DBD_COUP_TF"/>
    <property type="match status" value="1"/>
</dbReference>
<dbReference type="CDD" id="cd06948">
    <property type="entry name" value="NR_LBD_COUP-TF"/>
    <property type="match status" value="1"/>
</dbReference>
<dbReference type="FunFam" id="1.10.565.10:FF:000003">
    <property type="entry name" value="Coup transcription factor 2 isoform 1"/>
    <property type="match status" value="1"/>
</dbReference>
<dbReference type="FunFam" id="3.30.50.10:FF:000016">
    <property type="entry name" value="Nuclear receptor subfamily 2 group F member 1"/>
    <property type="match status" value="1"/>
</dbReference>
<dbReference type="Gene3D" id="3.30.50.10">
    <property type="entry name" value="Erythroid Transcription Factor GATA-1, subunit A"/>
    <property type="match status" value="1"/>
</dbReference>
<dbReference type="Gene3D" id="1.10.565.10">
    <property type="entry name" value="Retinoid X Receptor"/>
    <property type="match status" value="1"/>
</dbReference>
<dbReference type="InterPro" id="IPR035500">
    <property type="entry name" value="NHR-like_dom_sf"/>
</dbReference>
<dbReference type="InterPro" id="IPR000536">
    <property type="entry name" value="Nucl_hrmn_rcpt_lig-bd"/>
</dbReference>
<dbReference type="InterPro" id="IPR050274">
    <property type="entry name" value="Nuclear_hormone_rcpt_NR2"/>
</dbReference>
<dbReference type="InterPro" id="IPR001723">
    <property type="entry name" value="Nuclear_hrmn_rcpt"/>
</dbReference>
<dbReference type="InterPro" id="IPR001628">
    <property type="entry name" value="Znf_hrmn_rcpt"/>
</dbReference>
<dbReference type="InterPro" id="IPR013088">
    <property type="entry name" value="Znf_NHR/GATA"/>
</dbReference>
<dbReference type="PANTHER" id="PTHR24083">
    <property type="entry name" value="NUCLEAR HORMONE RECEPTOR"/>
    <property type="match status" value="1"/>
</dbReference>
<dbReference type="Pfam" id="PF00104">
    <property type="entry name" value="Hormone_recep"/>
    <property type="match status" value="1"/>
</dbReference>
<dbReference type="Pfam" id="PF00105">
    <property type="entry name" value="zf-C4"/>
    <property type="match status" value="1"/>
</dbReference>
<dbReference type="PRINTS" id="PR01282">
    <property type="entry name" value="COUPTNFACTOR"/>
</dbReference>
<dbReference type="PRINTS" id="PR00398">
    <property type="entry name" value="STRDHORMONER"/>
</dbReference>
<dbReference type="PRINTS" id="PR00047">
    <property type="entry name" value="STROIDFINGER"/>
</dbReference>
<dbReference type="SMART" id="SM00430">
    <property type="entry name" value="HOLI"/>
    <property type="match status" value="1"/>
</dbReference>
<dbReference type="SMART" id="SM00399">
    <property type="entry name" value="ZnF_C4"/>
    <property type="match status" value="1"/>
</dbReference>
<dbReference type="SUPFAM" id="SSF57716">
    <property type="entry name" value="Glucocorticoid receptor-like (DNA-binding domain)"/>
    <property type="match status" value="1"/>
</dbReference>
<dbReference type="SUPFAM" id="SSF48508">
    <property type="entry name" value="Nuclear receptor ligand-binding domain"/>
    <property type="match status" value="1"/>
</dbReference>
<dbReference type="PROSITE" id="PS51843">
    <property type="entry name" value="NR_LBD"/>
    <property type="match status" value="1"/>
</dbReference>
<dbReference type="PROSITE" id="PS00031">
    <property type="entry name" value="NUCLEAR_REC_DBD_1"/>
    <property type="match status" value="1"/>
</dbReference>
<dbReference type="PROSITE" id="PS51030">
    <property type="entry name" value="NUCLEAR_REC_DBD_2"/>
    <property type="match status" value="1"/>
</dbReference>
<proteinExistence type="evidence at protein level"/>